<comment type="function">
    <text evidence="3">Involved in the biosynthesis of phosphinothricin tripeptide (PTT), also known as bialaphos (BA), a natural-product antibiotic and potent herbicide (PubMed:16251301). Adenylates L-alanine and loads it onto a peptidyl carrier domain via a thioester linkage to the phosphopanthetheine moiety (PubMed:16251301). Shows weaker activity with aminobutyric acid and L-serine (PubMed:16251301).</text>
</comment>
<comment type="catalytic activity">
    <reaction evidence="3">
        <text>holo-[peptidyl-carrier protein] + L-alanine + ATP = L-alanyl-[peptidyl-carrier protein] + AMP + diphosphate</text>
        <dbReference type="Rhea" id="RHEA:61800"/>
        <dbReference type="Rhea" id="RHEA-COMP:11480"/>
        <dbReference type="Rhea" id="RHEA-COMP:15938"/>
        <dbReference type="ChEBI" id="CHEBI:30616"/>
        <dbReference type="ChEBI" id="CHEBI:33019"/>
        <dbReference type="ChEBI" id="CHEBI:57972"/>
        <dbReference type="ChEBI" id="CHEBI:64479"/>
        <dbReference type="ChEBI" id="CHEBI:144958"/>
        <dbReference type="ChEBI" id="CHEBI:456215"/>
        <dbReference type="EC" id="6.2.1.67"/>
    </reaction>
    <physiologicalReaction direction="left-to-right" evidence="3">
        <dbReference type="Rhea" id="RHEA:61801"/>
    </physiologicalReaction>
</comment>
<comment type="cofactor">
    <cofactor evidence="6">
        <name>pantetheine 4'-phosphate</name>
        <dbReference type="ChEBI" id="CHEBI:47942"/>
    </cofactor>
</comment>
<comment type="pathway">
    <text evidence="7 8 9">Secondary metabolite biosynthesis; bialaphos biosynthesis.</text>
</comment>
<comment type="domain">
    <text evidence="9">Modular protein that contains a first peptidyl carrier protein domain which bears a phosphopantetheinyl arm to attach the activated amino acid, a condensation domain, an adenylation domain which activates the alanine residue into an aminoacyl-AMP ester and a second peptidyl carrier protein domain.</text>
</comment>
<comment type="disruption phenotype">
    <text evidence="3">Mutant cannot produce PTT. PhsB cannot take on the function of PhsC and vice versa.</text>
</comment>
<comment type="similarity">
    <text evidence="6">Belongs to the NRP synthetase family.</text>
</comment>
<keyword id="KW-0045">Antibiotic biosynthesis</keyword>
<keyword id="KW-0436">Ligase</keyword>
<keyword id="KW-0596">Phosphopantetheine</keyword>
<keyword id="KW-0597">Phosphoprotein</keyword>
<keyword id="KW-1185">Reference proteome</keyword>
<keyword id="KW-0677">Repeat</keyword>
<evidence type="ECO:0000255" key="1">
    <source>
        <dbReference type="PROSITE-ProRule" id="PRU00258"/>
    </source>
</evidence>
<evidence type="ECO:0000256" key="2">
    <source>
        <dbReference type="SAM" id="MobiDB-lite"/>
    </source>
</evidence>
<evidence type="ECO:0000269" key="3">
    <source>
    </source>
</evidence>
<evidence type="ECO:0000303" key="4">
    <source>
    </source>
</evidence>
<evidence type="ECO:0000303" key="5">
    <source>
    </source>
</evidence>
<evidence type="ECO:0000305" key="6"/>
<evidence type="ECO:0000305" key="7">
    <source>
    </source>
</evidence>
<evidence type="ECO:0000305" key="8">
    <source>
    </source>
</evidence>
<evidence type="ECO:0000305" key="9">
    <source>
    </source>
</evidence>
<evidence type="ECO:0000312" key="10">
    <source>
        <dbReference type="EMBL" id="EFL30528.1"/>
    </source>
</evidence>
<reference key="1">
    <citation type="journal article" date="2004" name="Appl. Environ. Microbiol.">
        <title>Biosynthetic gene cluster of the herbicide phosphinothricin tripeptide from Streptomyces viridochromogenes Tu494.</title>
        <authorList>
            <person name="Schwartz D."/>
            <person name="Berger S."/>
            <person name="Heinzelmann E."/>
            <person name="Muschko K."/>
            <person name="Welzel K."/>
            <person name="Wohlleben W."/>
        </authorList>
    </citation>
    <scope>NUCLEOTIDE SEQUENCE [GENOMIC DNA]</scope>
    <source>
        <strain>DSM 40736 / JCM 4977 / BCRC 1201 / Tue 494</strain>
    </source>
</reference>
<reference key="2">
    <citation type="journal article" date="2005" name="Antimicrob. Agents Chemother.">
        <title>Molecular cloning, sequence analysis, and heterologous expression of the phosphinothricin tripeptide biosynthetic gene cluster from Streptomyces viridochromogenes DSM 40736.</title>
        <authorList>
            <person name="Blodgett J.A."/>
            <person name="Zhang J.K."/>
            <person name="Metcalf W.W."/>
        </authorList>
    </citation>
    <scope>NUCLEOTIDE SEQUENCE [GENOMIC DNA]</scope>
    <source>
        <strain>DSM 40736 / JCM 4977 / BCRC 1201 / Tue 494</strain>
    </source>
</reference>
<reference key="3">
    <citation type="submission" date="2009-02" db="EMBL/GenBank/DDBJ databases">
        <title>Annotation of Streptomyces viridochromogenes strain DSM 40736.</title>
        <authorList>
            <consortium name="The Broad Institute Genome Sequencing Platform"/>
            <consortium name="Broad Institute Microbial Sequencing Center"/>
            <person name="Fischbach M."/>
            <person name="Godfrey P."/>
            <person name="Ward D."/>
            <person name="Young S."/>
            <person name="Zeng Q."/>
            <person name="Koehrsen M."/>
            <person name="Alvarado L."/>
            <person name="Berlin A.M."/>
            <person name="Bochicchio J."/>
            <person name="Borenstein D."/>
            <person name="Chapman S.B."/>
            <person name="Chen Z."/>
            <person name="Engels R."/>
            <person name="Freedman E."/>
            <person name="Gellesch M."/>
            <person name="Goldberg J."/>
            <person name="Griggs A."/>
            <person name="Gujja S."/>
            <person name="Heilman E.R."/>
            <person name="Heiman D.I."/>
            <person name="Hepburn T.A."/>
            <person name="Howarth C."/>
            <person name="Jen D."/>
            <person name="Larson L."/>
            <person name="Lewis B."/>
            <person name="Mehta T."/>
            <person name="Park D."/>
            <person name="Pearson M."/>
            <person name="Richards J."/>
            <person name="Roberts A."/>
            <person name="Saif S."/>
            <person name="Shea T.D."/>
            <person name="Shenoy N."/>
            <person name="Sisk P."/>
            <person name="Stolte C."/>
            <person name="Sykes S.N."/>
            <person name="Thomson T."/>
            <person name="Walk T."/>
            <person name="White J."/>
            <person name="Yandava C."/>
            <person name="Straight P."/>
            <person name="Clardy J."/>
            <person name="Hung D."/>
            <person name="Kolter R."/>
            <person name="Mekalanos J."/>
            <person name="Walker S."/>
            <person name="Walsh C.T."/>
            <person name="Wieland-Brown L.C."/>
            <person name="Haas B."/>
            <person name="Nusbaum C."/>
            <person name="Birren B."/>
        </authorList>
    </citation>
    <scope>NUCLEOTIDE SEQUENCE [LARGE SCALE GENOMIC DNA]</scope>
    <source>
        <strain>DSM 40736 / JCM 4977 / BCRC 1201 / Tue 494</strain>
    </source>
</reference>
<reference key="4">
    <citation type="journal article" date="2005" name="Antimicrob. Agents Chemother.">
        <title>Phosphinothricin tripeptide synthetases in Streptomyces viridochromogenes Tue494.</title>
        <authorList>
            <person name="Schwartz D."/>
            <person name="Grammel N."/>
            <person name="Heinzelmann E."/>
            <person name="Keller U."/>
            <person name="Wohlleben W."/>
        </authorList>
    </citation>
    <scope>FUNCTION</scope>
    <scope>CATALYTIC ACTIVITY</scope>
    <scope>DOMAIN</scope>
    <scope>DISRUPTION PHENOTYPE</scope>
    <source>
        <strain>DSM 40736 / JCM 4977 / BCRC 1201 / Tue 494</strain>
    </source>
</reference>
<protein>
    <recommendedName>
        <fullName evidence="6">Phosphinothricin tripeptide synthetase PhsB</fullName>
        <shortName evidence="6">PTT synthase PhsB</shortName>
        <ecNumber evidence="3">6.2.1.67</ecNumber>
    </recommendedName>
    <alternativeName>
        <fullName evidence="6">L-alanine--[L-alanyl-carrier protein] ligase</fullName>
    </alternativeName>
    <alternativeName>
        <fullName evidence="6">Nonribosomal peptide synthetase PhsB</fullName>
    </alternativeName>
    <alternativeName>
        <fullName evidence="5">Phosphinothricin tripeptide synthetase III</fullName>
        <shortName evidence="5">PTT synthetase III</shortName>
    </alternativeName>
</protein>
<proteinExistence type="evidence at protein level"/>
<organism>
    <name type="scientific">Streptomyces viridochromogenes (strain DSM 40736 / JCM 4977 / BCRC 1201 / Tue 494)</name>
    <dbReference type="NCBI Taxonomy" id="591159"/>
    <lineage>
        <taxon>Bacteria</taxon>
        <taxon>Bacillati</taxon>
        <taxon>Actinomycetota</taxon>
        <taxon>Actinomycetes</taxon>
        <taxon>Kitasatosporales</taxon>
        <taxon>Streptomycetaceae</taxon>
        <taxon>Streptomyces</taxon>
    </lineage>
</organism>
<feature type="chain" id="PRO_0000454847" description="Phosphinothricin tripeptide synthetase PhsB">
    <location>
        <begin position="1"/>
        <end position="1189"/>
    </location>
</feature>
<feature type="domain" description="Carrier 1" evidence="1">
    <location>
        <begin position="5"/>
        <end position="80"/>
    </location>
</feature>
<feature type="domain" description="Carrier 2" evidence="1">
    <location>
        <begin position="1076"/>
        <end position="1151"/>
    </location>
</feature>
<feature type="region of interest" description="Disordered" evidence="2">
    <location>
        <begin position="75"/>
        <end position="97"/>
    </location>
</feature>
<feature type="region of interest" description="Condensation" evidence="6">
    <location>
        <begin position="100"/>
        <end position="541"/>
    </location>
</feature>
<feature type="region of interest" description="Disordered" evidence="2">
    <location>
        <begin position="454"/>
        <end position="476"/>
    </location>
</feature>
<feature type="region of interest" description="Adenylation" evidence="6">
    <location>
        <begin position="572"/>
        <end position="969"/>
    </location>
</feature>
<feature type="region of interest" description="Disordered" evidence="2">
    <location>
        <begin position="1045"/>
        <end position="1081"/>
    </location>
</feature>
<feature type="compositionally biased region" description="Basic and acidic residues" evidence="2">
    <location>
        <begin position="455"/>
        <end position="472"/>
    </location>
</feature>
<feature type="modified residue" description="O-(pantetheine 4'-phosphoryl)serine" evidence="1">
    <location>
        <position position="40"/>
    </location>
</feature>
<feature type="modified residue" description="O-(pantetheine 4'-phosphoryl)serine" evidence="1">
    <location>
        <position position="1111"/>
    </location>
</feature>
<feature type="sequence conflict" description="In Ref. 1; CAJ14037." evidence="6" ref="1">
    <original>V</original>
    <variation>S</variation>
    <location>
        <position position="157"/>
    </location>
</feature>
<feature type="sequence conflict" description="In Ref. 1; CAJ14037." evidence="6" ref="1">
    <original>R</original>
    <variation>P</variation>
    <location>
        <position position="743"/>
    </location>
</feature>
<dbReference type="EC" id="6.2.1.67" evidence="3"/>
<dbReference type="EMBL" id="X65195">
    <property type="protein sequence ID" value="CAJ14037.1"/>
    <property type="molecule type" value="Genomic_DNA"/>
</dbReference>
<dbReference type="EMBL" id="AY632421">
    <property type="protein sequence ID" value="AAU00073.1"/>
    <property type="molecule type" value="Genomic_DNA"/>
</dbReference>
<dbReference type="EMBL" id="GG657757">
    <property type="protein sequence ID" value="EFL30528.1"/>
    <property type="molecule type" value="Genomic_DNA"/>
</dbReference>
<dbReference type="RefSeq" id="WP_003988643.1">
    <property type="nucleotide sequence ID" value="NZ_GG657757.1"/>
</dbReference>
<dbReference type="SMR" id="D9XF49"/>
<dbReference type="STRING" id="591159.SSQG_01046"/>
<dbReference type="KEGG" id="ag:CAJ14037"/>
<dbReference type="eggNOG" id="COG1020">
    <property type="taxonomic scope" value="Bacteria"/>
</dbReference>
<dbReference type="HOGENOM" id="CLU_000022_2_4_11"/>
<dbReference type="OrthoDB" id="2472181at2"/>
<dbReference type="BRENDA" id="6.2.1.67">
    <property type="organism ID" value="6116"/>
</dbReference>
<dbReference type="UniPathway" id="UPA00197"/>
<dbReference type="Proteomes" id="UP000004184">
    <property type="component" value="Unassembled WGS sequence"/>
</dbReference>
<dbReference type="GO" id="GO:0005829">
    <property type="term" value="C:cytosol"/>
    <property type="evidence" value="ECO:0007669"/>
    <property type="project" value="TreeGrafter"/>
</dbReference>
<dbReference type="GO" id="GO:0016874">
    <property type="term" value="F:ligase activity"/>
    <property type="evidence" value="ECO:0007669"/>
    <property type="project" value="UniProtKB-KW"/>
</dbReference>
<dbReference type="GO" id="GO:0031177">
    <property type="term" value="F:phosphopantetheine binding"/>
    <property type="evidence" value="ECO:0007669"/>
    <property type="project" value="InterPro"/>
</dbReference>
<dbReference type="GO" id="GO:0043041">
    <property type="term" value="P:amino acid activation for nonribosomal peptide biosynthetic process"/>
    <property type="evidence" value="ECO:0007669"/>
    <property type="project" value="TreeGrafter"/>
</dbReference>
<dbReference type="GO" id="GO:0017000">
    <property type="term" value="P:antibiotic biosynthetic process"/>
    <property type="evidence" value="ECO:0007669"/>
    <property type="project" value="UniProtKB-KW"/>
</dbReference>
<dbReference type="GO" id="GO:0008610">
    <property type="term" value="P:lipid biosynthetic process"/>
    <property type="evidence" value="ECO:0007669"/>
    <property type="project" value="UniProtKB-ARBA"/>
</dbReference>
<dbReference type="GO" id="GO:0044550">
    <property type="term" value="P:secondary metabolite biosynthetic process"/>
    <property type="evidence" value="ECO:0007669"/>
    <property type="project" value="TreeGrafter"/>
</dbReference>
<dbReference type="CDD" id="cd17646">
    <property type="entry name" value="A_NRPS_AB3403-like"/>
    <property type="match status" value="1"/>
</dbReference>
<dbReference type="CDD" id="cd19531">
    <property type="entry name" value="LCL_NRPS-like"/>
    <property type="match status" value="1"/>
</dbReference>
<dbReference type="FunFam" id="3.40.50.12780:FF:000012">
    <property type="entry name" value="Non-ribosomal peptide synthetase"/>
    <property type="match status" value="1"/>
</dbReference>
<dbReference type="FunFam" id="3.40.50.980:FF:000001">
    <property type="entry name" value="Non-ribosomal peptide synthetase"/>
    <property type="match status" value="1"/>
</dbReference>
<dbReference type="FunFam" id="2.30.38.10:FF:000001">
    <property type="entry name" value="Non-ribosomal peptide synthetase PvdI"/>
    <property type="match status" value="1"/>
</dbReference>
<dbReference type="FunFam" id="1.10.1200.10:FF:000005">
    <property type="entry name" value="Nonribosomal peptide synthetase 1"/>
    <property type="match status" value="1"/>
</dbReference>
<dbReference type="Gene3D" id="3.30.300.30">
    <property type="match status" value="1"/>
</dbReference>
<dbReference type="Gene3D" id="3.40.50.980">
    <property type="match status" value="2"/>
</dbReference>
<dbReference type="Gene3D" id="1.10.1200.10">
    <property type="entry name" value="ACP-like"/>
    <property type="match status" value="2"/>
</dbReference>
<dbReference type="Gene3D" id="3.30.559.10">
    <property type="entry name" value="Chloramphenicol acetyltransferase-like domain"/>
    <property type="match status" value="1"/>
</dbReference>
<dbReference type="Gene3D" id="2.30.38.10">
    <property type="entry name" value="Luciferase, Domain 3"/>
    <property type="match status" value="1"/>
</dbReference>
<dbReference type="Gene3D" id="3.30.559.30">
    <property type="entry name" value="Nonribosomal peptide synthetase, condensation domain"/>
    <property type="match status" value="1"/>
</dbReference>
<dbReference type="InterPro" id="IPR010071">
    <property type="entry name" value="AA_adenyl_dom"/>
</dbReference>
<dbReference type="InterPro" id="IPR036736">
    <property type="entry name" value="ACP-like_sf"/>
</dbReference>
<dbReference type="InterPro" id="IPR025110">
    <property type="entry name" value="AMP-bd_C"/>
</dbReference>
<dbReference type="InterPro" id="IPR045851">
    <property type="entry name" value="AMP-bd_C_sf"/>
</dbReference>
<dbReference type="InterPro" id="IPR020845">
    <property type="entry name" value="AMP-binding_CS"/>
</dbReference>
<dbReference type="InterPro" id="IPR000873">
    <property type="entry name" value="AMP-dep_synth/lig_dom"/>
</dbReference>
<dbReference type="InterPro" id="IPR023213">
    <property type="entry name" value="CAT-like_dom_sf"/>
</dbReference>
<dbReference type="InterPro" id="IPR001242">
    <property type="entry name" value="Condensatn"/>
</dbReference>
<dbReference type="InterPro" id="IPR020806">
    <property type="entry name" value="PKS_PP-bd"/>
</dbReference>
<dbReference type="InterPro" id="IPR009081">
    <property type="entry name" value="PP-bd_ACP"/>
</dbReference>
<dbReference type="InterPro" id="IPR006162">
    <property type="entry name" value="Ppantetheine_attach_site"/>
</dbReference>
<dbReference type="NCBIfam" id="TIGR01733">
    <property type="entry name" value="AA-adenyl-dom"/>
    <property type="match status" value="1"/>
</dbReference>
<dbReference type="PANTHER" id="PTHR45527:SF1">
    <property type="entry name" value="FATTY ACID SYNTHASE"/>
    <property type="match status" value="1"/>
</dbReference>
<dbReference type="PANTHER" id="PTHR45527">
    <property type="entry name" value="NONRIBOSOMAL PEPTIDE SYNTHETASE"/>
    <property type="match status" value="1"/>
</dbReference>
<dbReference type="Pfam" id="PF00501">
    <property type="entry name" value="AMP-binding"/>
    <property type="match status" value="1"/>
</dbReference>
<dbReference type="Pfam" id="PF13193">
    <property type="entry name" value="AMP-binding_C"/>
    <property type="match status" value="1"/>
</dbReference>
<dbReference type="Pfam" id="PF00668">
    <property type="entry name" value="Condensation"/>
    <property type="match status" value="1"/>
</dbReference>
<dbReference type="Pfam" id="PF00550">
    <property type="entry name" value="PP-binding"/>
    <property type="match status" value="2"/>
</dbReference>
<dbReference type="SMART" id="SM00823">
    <property type="entry name" value="PKS_PP"/>
    <property type="match status" value="2"/>
</dbReference>
<dbReference type="SUPFAM" id="SSF56801">
    <property type="entry name" value="Acetyl-CoA synthetase-like"/>
    <property type="match status" value="1"/>
</dbReference>
<dbReference type="SUPFAM" id="SSF47336">
    <property type="entry name" value="ACP-like"/>
    <property type="match status" value="2"/>
</dbReference>
<dbReference type="SUPFAM" id="SSF52777">
    <property type="entry name" value="CoA-dependent acyltransferases"/>
    <property type="match status" value="2"/>
</dbReference>
<dbReference type="PROSITE" id="PS00455">
    <property type="entry name" value="AMP_BINDING"/>
    <property type="match status" value="1"/>
</dbReference>
<dbReference type="PROSITE" id="PS50075">
    <property type="entry name" value="CARRIER"/>
    <property type="match status" value="2"/>
</dbReference>
<dbReference type="PROSITE" id="PS00012">
    <property type="entry name" value="PHOSPHOPANTETHEINE"/>
    <property type="match status" value="2"/>
</dbReference>
<accession>D9XF49</accession>
<accession>Q4JFF4</accession>
<accession>Q5IW60</accession>
<gene>
    <name evidence="4" type="primary">phsB</name>
    <name evidence="10" type="ORF">SSQG_01046</name>
</gene>
<sequence>MTAPQTDDVVTGRIAAIWAGLLDRPEIGIDDNVFRLGASSVMAVRAAARIREALDTPLPLRDVFESPSPAALAKRIRASRSTAPTASGPPRTAPVDSTATAPLTFQQEPMWLFDRMQPGNATYTIHFALRHEGHLDLGVLDRCVRDVVRRHAVLRTVFPSVDDRPAQQVLDRAHIPLGESDLRALPEAERPVAAARIAAREAQAPFDLSTGPMLRVRVLHLSDTRQRLLLTMPHIVTDAWSDDILVRELNHLYRAHTDGIAPALPPLPVQYHDWAARQRAELAGTEAELLDWWRHHLAGVPPLLELPADRPRAAVKRHRGGRLLFDIPESVTRRLEGLAKDEGTTPYAVLLAGFAALLHRLTGQDDLLVGSPVAGRTHTETEGLVGLFVNTVAVRCDVAGRPSFLELVRRTRRTVVESFARQELPFHRLVEELAPVRSPAYTPLVQVMLALQNTPDRDGREPGEGPFAREESGGDTGSAMFDLTLFVTGSASGMRGEWEYDSDLFDRERVAELGPQLVTLLDAALDRTDLPVALLPLQEPAARDRMVQAWNDTADVLPGGPDADSLPALLSAQAHRTPDAVALRTDDGAELTYRQLHLRADRLARRLLSYGLAPESVVAVACERSFEMVVALLAVLKAGCAYLPIDPGDPAERTAYLLRDSGARVLLTLHRHTANLPDADGTTVVTLDEPDPSGDMQDTTSALPGIAPGQLAYLIYTSGSTGRPKGVLNEHGPVCNRIRWGMRAFPPGPGTIVLQKTPIHFDVSVWEMFWTLATGATLVLARPDGHRDPQYLAGRLVEEGVTDVHFVPSMLAAFLDVGALPEGHSLRRVFCSGEALSPGLRDRLFARLPHVELHNLYGPTEAAIEVTHWRCRPGEPTVPIGRPIANARCYVLDAELNPVPPGVPGELWLGGVPVARGYHGRADLTAERFLPDPYGPAGSRMYRSGDLARWRRDGVLEYLGREDGQVKLRGQRLELGEIEATLAGHAEVADVVVDVRGTGPQDRRLVAYVRPARPGRDEQLRTTLRELAAARLPAYMRPSSYVTLDRVPLTPSGKTDRKALPDPAAGEQPRSGRGAAPGTPAERELAGIWAELLGAGEVGGDDNFFEIGGHSLLAARMTGRASTAFGVDLPVSLAFEHPVLRDFALAVVTAQAATDSAATERLLAELEALADTELEALPDEDGPDGRSGE</sequence>
<name>PHSB_STRVT</name>